<comment type="subcellular location">
    <subcellularLocation>
        <location>Plastid</location>
        <location>Chloroplast</location>
    </subcellularLocation>
</comment>
<comment type="similarity">
    <text evidence="1">Belongs to the iron-sulfur cluster assembly SufBD family.</text>
</comment>
<keyword id="KW-0150">Chloroplast</keyword>
<keyword id="KW-0934">Plastid</keyword>
<reference key="1">
    <citation type="journal article" date="1992" name="J. Mol. Biol.">
        <title>Large ATP synthase operon of the red alga Antithamnion sp. resembles the corresponding operon in cyanobacteria.</title>
        <authorList>
            <person name="Kostrzewa M."/>
            <person name="Zetsche K."/>
        </authorList>
    </citation>
    <scope>NUCLEOTIDE SEQUENCE [GENOMIC DNA]</scope>
    <source>
        <strain>LB 95.79</strain>
    </source>
</reference>
<protein>
    <recommendedName>
        <fullName>Iron-sulfur cluster assembly SufBD family protein ycf24</fullName>
    </recommendedName>
    <alternativeName>
        <fullName>ORF 3</fullName>
    </alternativeName>
</protein>
<gene>
    <name type="primary">ycf24</name>
</gene>
<accession>Q02857</accession>
<proteinExistence type="inferred from homology"/>
<dbReference type="EMBL" id="X63382">
    <property type="protein sequence ID" value="CAA44986.1"/>
    <property type="molecule type" value="Genomic_DNA"/>
</dbReference>
<dbReference type="PIR" id="S37636">
    <property type="entry name" value="S37636"/>
</dbReference>
<dbReference type="SMR" id="Q02857"/>
<dbReference type="GO" id="GO:0009507">
    <property type="term" value="C:chloroplast"/>
    <property type="evidence" value="ECO:0007669"/>
    <property type="project" value="UniProtKB-SubCell"/>
</dbReference>
<dbReference type="GO" id="GO:0016226">
    <property type="term" value="P:iron-sulfur cluster assembly"/>
    <property type="evidence" value="ECO:0007669"/>
    <property type="project" value="InterPro"/>
</dbReference>
<dbReference type="InterPro" id="IPR055346">
    <property type="entry name" value="Fe-S_cluster_assembly_SufBD"/>
</dbReference>
<dbReference type="InterPro" id="IPR010231">
    <property type="entry name" value="SUF_FeS_clus_asmbl_SufB"/>
</dbReference>
<dbReference type="InterPro" id="IPR000825">
    <property type="entry name" value="SUF_FeS_clus_asmbl_SufBD_core"/>
</dbReference>
<dbReference type="InterPro" id="IPR037284">
    <property type="entry name" value="SUF_FeS_clus_asmbl_SufBD_sf"/>
</dbReference>
<dbReference type="NCBIfam" id="TIGR01980">
    <property type="entry name" value="sufB"/>
    <property type="match status" value="1"/>
</dbReference>
<dbReference type="PANTHER" id="PTHR30508">
    <property type="entry name" value="FES CLUSTER ASSEMBLY PROTEIN SUF"/>
    <property type="match status" value="1"/>
</dbReference>
<dbReference type="PANTHER" id="PTHR30508:SF1">
    <property type="entry name" value="UPF0051 PROTEIN ABCI8, CHLOROPLASTIC-RELATED"/>
    <property type="match status" value="1"/>
</dbReference>
<dbReference type="Pfam" id="PF01458">
    <property type="entry name" value="SUFBD_core"/>
    <property type="match status" value="1"/>
</dbReference>
<dbReference type="SUPFAM" id="SSF101960">
    <property type="entry name" value="Stabilizer of iron transporter SufD"/>
    <property type="match status" value="1"/>
</dbReference>
<feature type="chain" id="PRO_0000147387" description="Iron-sulfur cluster assembly SufBD family protein ycf24">
    <location>
        <begin position="1" status="less than"/>
        <end position="297"/>
    </location>
</feature>
<feature type="non-terminal residue">
    <location>
        <position position="1"/>
    </location>
</feature>
<evidence type="ECO:0000305" key="1"/>
<geneLocation type="chloroplast"/>
<sequence>SATFSHGSFCYIPPDTHCPLELSTYFRINNKESGQFERTLIIADKNSYVSYLEGCTAPQFDNNQLHAAVVELVALENATIKYSTVQNWYAGNEKGQGGIYNFVTKRGICIGNNSKILWTQVETGSAITWKYPSCILAGHNSIGEFSSIALTNNYQQADTGSKMIHIGKNTKSRILSKGISAGYSANSYRGLVKIGPKAHYSRNYSQCDSLLLSNTSKANTFPYIQAQNPYTKIEHEASTSKIGEEQIFYFLQRGINLENAISLMISGFCKEVLNELPMEFAVEADRLLNLKLEGTVG</sequence>
<name>YCF24_ANTSP</name>
<organism>
    <name type="scientific">Antithamnion sp.</name>
    <name type="common">Red alga</name>
    <dbReference type="NCBI Taxonomy" id="2767"/>
    <lineage>
        <taxon>Eukaryota</taxon>
        <taxon>Rhodophyta</taxon>
        <taxon>Florideophyceae</taxon>
        <taxon>Rhodymeniophycidae</taxon>
        <taxon>Ceramiales</taxon>
        <taxon>Ceramiaceae</taxon>
        <taxon>Antithamnion</taxon>
    </lineage>
</organism>